<feature type="chain" id="PRO_0000299867" description="Uncharacterized protein YDL242W">
    <location>
        <begin position="1"/>
        <end position="117"/>
    </location>
</feature>
<proteinExistence type="predicted"/>
<reference key="1">
    <citation type="journal article" date="1997" name="Nature">
        <title>The nucleotide sequence of Saccharomyces cerevisiae chromosome IV.</title>
        <authorList>
            <person name="Jacq C."/>
            <person name="Alt-Moerbe J."/>
            <person name="Andre B."/>
            <person name="Arnold W."/>
            <person name="Bahr A."/>
            <person name="Ballesta J.P.G."/>
            <person name="Bargues M."/>
            <person name="Baron L."/>
            <person name="Becker A."/>
            <person name="Biteau N."/>
            <person name="Bloecker H."/>
            <person name="Blugeon C."/>
            <person name="Boskovic J."/>
            <person name="Brandt P."/>
            <person name="Brueckner M."/>
            <person name="Buitrago M.J."/>
            <person name="Coster F."/>
            <person name="Delaveau T."/>
            <person name="del Rey F."/>
            <person name="Dujon B."/>
            <person name="Eide L.G."/>
            <person name="Garcia-Cantalejo J.M."/>
            <person name="Goffeau A."/>
            <person name="Gomez-Peris A."/>
            <person name="Granotier C."/>
            <person name="Hanemann V."/>
            <person name="Hankeln T."/>
            <person name="Hoheisel J.D."/>
            <person name="Jaeger W."/>
            <person name="Jimenez A."/>
            <person name="Jonniaux J.-L."/>
            <person name="Kraemer C."/>
            <person name="Kuester H."/>
            <person name="Laamanen P."/>
            <person name="Legros Y."/>
            <person name="Louis E.J."/>
            <person name="Moeller-Rieker S."/>
            <person name="Monnet A."/>
            <person name="Moro M."/>
            <person name="Mueller-Auer S."/>
            <person name="Nussbaumer B."/>
            <person name="Paricio N."/>
            <person name="Paulin L."/>
            <person name="Perea J."/>
            <person name="Perez-Alonso M."/>
            <person name="Perez-Ortin J.E."/>
            <person name="Pohl T.M."/>
            <person name="Prydz H."/>
            <person name="Purnelle B."/>
            <person name="Rasmussen S.W."/>
            <person name="Remacha M.A."/>
            <person name="Revuelta J.L."/>
            <person name="Rieger M."/>
            <person name="Salom D."/>
            <person name="Saluz H.P."/>
            <person name="Saiz J.E."/>
            <person name="Saren A.-M."/>
            <person name="Schaefer M."/>
            <person name="Scharfe M."/>
            <person name="Schmidt E.R."/>
            <person name="Schneider C."/>
            <person name="Scholler P."/>
            <person name="Schwarz S."/>
            <person name="Soler-Mira A."/>
            <person name="Urrestarazu L.A."/>
            <person name="Verhasselt P."/>
            <person name="Vissers S."/>
            <person name="Voet M."/>
            <person name="Volckaert G."/>
            <person name="Wagner G."/>
            <person name="Wambutt R."/>
            <person name="Wedler E."/>
            <person name="Wedler H."/>
            <person name="Woelfl S."/>
            <person name="Harris D.E."/>
            <person name="Bowman S."/>
            <person name="Brown D."/>
            <person name="Churcher C.M."/>
            <person name="Connor R."/>
            <person name="Dedman K."/>
            <person name="Gentles S."/>
            <person name="Hamlin N."/>
            <person name="Hunt S."/>
            <person name="Jones L."/>
            <person name="McDonald S."/>
            <person name="Murphy L.D."/>
            <person name="Niblett D."/>
            <person name="Odell C."/>
            <person name="Oliver K."/>
            <person name="Rajandream M.A."/>
            <person name="Richards C."/>
            <person name="Shore L."/>
            <person name="Walsh S.V."/>
            <person name="Barrell B.G."/>
            <person name="Dietrich F.S."/>
            <person name="Mulligan J.T."/>
            <person name="Allen E."/>
            <person name="Araujo R."/>
            <person name="Aviles E."/>
            <person name="Berno A."/>
            <person name="Carpenter J."/>
            <person name="Chen E."/>
            <person name="Cherry J.M."/>
            <person name="Chung E."/>
            <person name="Duncan M."/>
            <person name="Hunicke-Smith S."/>
            <person name="Hyman R.W."/>
            <person name="Komp C."/>
            <person name="Lashkari D."/>
            <person name="Lew H."/>
            <person name="Lin D."/>
            <person name="Mosedale D."/>
            <person name="Nakahara K."/>
            <person name="Namath A."/>
            <person name="Oefner P."/>
            <person name="Oh C."/>
            <person name="Petel F.X."/>
            <person name="Roberts D."/>
            <person name="Schramm S."/>
            <person name="Schroeder M."/>
            <person name="Shogren T."/>
            <person name="Shroff N."/>
            <person name="Winant A."/>
            <person name="Yelton M.A."/>
            <person name="Botstein D."/>
            <person name="Davis R.W."/>
            <person name="Johnston M."/>
            <person name="Andrews S."/>
            <person name="Brinkman R."/>
            <person name="Cooper J."/>
            <person name="Ding H."/>
            <person name="Du Z."/>
            <person name="Favello A."/>
            <person name="Fulton L."/>
            <person name="Gattung S."/>
            <person name="Greco T."/>
            <person name="Hallsworth K."/>
            <person name="Hawkins J."/>
            <person name="Hillier L.W."/>
            <person name="Jier M."/>
            <person name="Johnson D."/>
            <person name="Johnston L."/>
            <person name="Kirsten J."/>
            <person name="Kucaba T."/>
            <person name="Langston Y."/>
            <person name="Latreille P."/>
            <person name="Le T."/>
            <person name="Mardis E."/>
            <person name="Menezes S."/>
            <person name="Miller N."/>
            <person name="Nhan M."/>
            <person name="Pauley A."/>
            <person name="Peluso D."/>
            <person name="Rifkin L."/>
            <person name="Riles L."/>
            <person name="Taich A."/>
            <person name="Trevaskis E."/>
            <person name="Vignati D."/>
            <person name="Wilcox L."/>
            <person name="Wohldman P."/>
            <person name="Vaudin M."/>
            <person name="Wilson R."/>
            <person name="Waterston R."/>
            <person name="Albermann K."/>
            <person name="Hani J."/>
            <person name="Heumann K."/>
            <person name="Kleine K."/>
            <person name="Mewes H.-W."/>
            <person name="Zollner A."/>
            <person name="Zaccaria P."/>
        </authorList>
    </citation>
    <scope>NUCLEOTIDE SEQUENCE [LARGE SCALE GENOMIC DNA]</scope>
    <source>
        <strain>ATCC 204508 / S288c</strain>
    </source>
</reference>
<reference key="2">
    <citation type="journal article" date="2014" name="G3 (Bethesda)">
        <title>The reference genome sequence of Saccharomyces cerevisiae: Then and now.</title>
        <authorList>
            <person name="Engel S.R."/>
            <person name="Dietrich F.S."/>
            <person name="Fisk D.G."/>
            <person name="Binkley G."/>
            <person name="Balakrishnan R."/>
            <person name="Costanzo M.C."/>
            <person name="Dwight S.S."/>
            <person name="Hitz B.C."/>
            <person name="Karra K."/>
            <person name="Nash R.S."/>
            <person name="Weng S."/>
            <person name="Wong E.D."/>
            <person name="Lloyd P."/>
            <person name="Skrzypek M.S."/>
            <person name="Miyasato S.R."/>
            <person name="Simison M."/>
            <person name="Cherry J.M."/>
        </authorList>
    </citation>
    <scope>GENOME REANNOTATION</scope>
    <source>
        <strain>ATCC 204508 / S288c</strain>
    </source>
</reference>
<organism>
    <name type="scientific">Saccharomyces cerevisiae (strain ATCC 204508 / S288c)</name>
    <name type="common">Baker's yeast</name>
    <dbReference type="NCBI Taxonomy" id="559292"/>
    <lineage>
        <taxon>Eukaryota</taxon>
        <taxon>Fungi</taxon>
        <taxon>Dikarya</taxon>
        <taxon>Ascomycota</taxon>
        <taxon>Saccharomycotina</taxon>
        <taxon>Saccharomycetes</taxon>
        <taxon>Saccharomycetales</taxon>
        <taxon>Saccharomycetaceae</taxon>
        <taxon>Saccharomyces</taxon>
    </lineage>
</organism>
<accession>Q07746</accession>
<accession>A0A1S0T052</accession>
<sequence>MNLEESQSNRGTLNIKKILVIVCMTNKICKHLIQSLLLSKRRLVSVLFDNYQGDMKLRSSPSAIPLVPSTKILQAMEARNDIVDSLIINSHATESDRRTLGDHEVRQCEDTNFGFKI</sequence>
<gene>
    <name type="ordered locus">YDL242W</name>
</gene>
<protein>
    <recommendedName>
        <fullName>Uncharacterized protein YDL242W</fullName>
    </recommendedName>
</protein>
<keyword id="KW-1185">Reference proteome</keyword>
<dbReference type="EMBL" id="Z74290">
    <property type="protein sequence ID" value="CAA98822.1"/>
    <property type="molecule type" value="Genomic_DNA"/>
</dbReference>
<dbReference type="EMBL" id="BK006938">
    <property type="protein sequence ID" value="DAA80273.1"/>
    <property type="molecule type" value="Genomic_DNA"/>
</dbReference>
<dbReference type="PIR" id="S67806">
    <property type="entry name" value="S67806"/>
</dbReference>
<dbReference type="RefSeq" id="NP_001335753.1">
    <property type="nucleotide sequence ID" value="NM_001348898.1"/>
</dbReference>
<dbReference type="FunCoup" id="Q07746">
    <property type="interactions" value="24"/>
</dbReference>
<dbReference type="IntAct" id="Q07746">
    <property type="interactions" value="2"/>
</dbReference>
<dbReference type="STRING" id="4932.YDL242W"/>
<dbReference type="PaxDb" id="4932-YDL242W"/>
<dbReference type="PeptideAtlas" id="Q07746"/>
<dbReference type="EnsemblFungi" id="YDL242W_mRNA">
    <property type="protein sequence ID" value="YDL242W"/>
    <property type="gene ID" value="YDL242W"/>
</dbReference>
<dbReference type="GeneID" id="851355"/>
<dbReference type="AGR" id="SGD:S000002401"/>
<dbReference type="SGD" id="S000002401">
    <property type="gene designation" value="YDL242W"/>
</dbReference>
<dbReference type="HOGENOM" id="CLU_2086667_0_0_1"/>
<dbReference type="InParanoid" id="Q07746"/>
<dbReference type="OrthoDB" id="10311070at2759"/>
<dbReference type="PRO" id="PR:Q07746"/>
<dbReference type="Proteomes" id="UP000002311">
    <property type="component" value="Chromosome IV"/>
</dbReference>
<dbReference type="RNAct" id="Q07746">
    <property type="molecule type" value="protein"/>
</dbReference>
<name>YD242_YEAST</name>